<keyword id="KW-0002">3D-structure</keyword>
<keyword id="KW-0472">Membrane</keyword>
<keyword id="KW-0496">Mitochondrion</keyword>
<keyword id="KW-0999">Mitochondrion inner membrane</keyword>
<keyword id="KW-0507">mRNA processing</keyword>
<keyword id="KW-0508">mRNA splicing</keyword>
<keyword id="KW-1185">Reference proteome</keyword>
<keyword id="KW-0694">RNA-binding</keyword>
<keyword id="KW-0812">Transmembrane</keyword>
<keyword id="KW-1133">Transmembrane helix</keyword>
<accession>Q9ZZW7</accession>
<accession>A0A0A7NYF0</accession>
<accession>Q36758</accession>
<proteinExistence type="evidence at protein level"/>
<dbReference type="EMBL" id="KP263414">
    <property type="protein sequence ID" value="AIZ98892.1"/>
    <property type="molecule type" value="Genomic_DNA"/>
</dbReference>
<dbReference type="EMBL" id="X14637">
    <property type="protein sequence ID" value="CAA32785.1"/>
    <property type="molecule type" value="Genomic_DNA"/>
</dbReference>
<dbReference type="PIR" id="S07845">
    <property type="entry name" value="S07845"/>
</dbReference>
<dbReference type="PIR" id="S78664">
    <property type="entry name" value="S78664"/>
</dbReference>
<dbReference type="RefSeq" id="NP_009317.1">
    <property type="nucleotide sequence ID" value="NC_001224.1"/>
</dbReference>
<dbReference type="PDB" id="2AB5">
    <property type="method" value="X-ray"/>
    <property type="resolution" value="2.20 A"/>
    <property type="chains" value="A/B=256-517"/>
</dbReference>
<dbReference type="PDBsum" id="2AB5"/>
<dbReference type="SMR" id="Q9ZZW7"/>
<dbReference type="BioGRID" id="34796">
    <property type="interactions" value="5"/>
</dbReference>
<dbReference type="ComplexPortal" id="CPX-1331">
    <property type="entry name" value="bI3 intron splicing factor complex"/>
</dbReference>
<dbReference type="FunCoup" id="Q9ZZW7">
    <property type="interactions" value="97"/>
</dbReference>
<dbReference type="STRING" id="4932.Q0115"/>
<dbReference type="PaxDb" id="4932-Q0115"/>
<dbReference type="PeptideAtlas" id="Q9ZZW7"/>
<dbReference type="EnsemblFungi" id="Q0115_mRNA">
    <property type="protein sequence ID" value="Q0115"/>
    <property type="gene ID" value="Q0115"/>
</dbReference>
<dbReference type="GeneID" id="854605"/>
<dbReference type="KEGG" id="sce:Q0115"/>
<dbReference type="AGR" id="SGD:S000007272"/>
<dbReference type="SGD" id="S000007272">
    <property type="gene designation" value="BI3"/>
</dbReference>
<dbReference type="VEuPathDB" id="FungiDB:Q0115"/>
<dbReference type="eggNOG" id="KOG4663">
    <property type="taxonomic scope" value="Eukaryota"/>
</dbReference>
<dbReference type="GeneTree" id="ENSGT00390000017948"/>
<dbReference type="HOGENOM" id="CLU_526993_0_0_1"/>
<dbReference type="InParanoid" id="Q9ZZW7"/>
<dbReference type="OMA" id="EMHIRDI"/>
<dbReference type="OrthoDB" id="5412286at2759"/>
<dbReference type="BioCyc" id="YEAST:G3O-34381-MONOMER"/>
<dbReference type="EvolutionaryTrace" id="Q9ZZW7"/>
<dbReference type="PRO" id="PR:Q9ZZW7"/>
<dbReference type="Proteomes" id="UP000002311">
    <property type="component" value="Mitochondrion"/>
</dbReference>
<dbReference type="RNAct" id="Q9ZZW7">
    <property type="molecule type" value="protein"/>
</dbReference>
<dbReference type="GO" id="GO:0005743">
    <property type="term" value="C:mitochondrial inner membrane"/>
    <property type="evidence" value="ECO:0007669"/>
    <property type="project" value="UniProtKB-SubCell"/>
</dbReference>
<dbReference type="GO" id="GO:0005739">
    <property type="term" value="C:mitochondrion"/>
    <property type="evidence" value="ECO:0000303"/>
    <property type="project" value="ComplexPortal"/>
</dbReference>
<dbReference type="GO" id="GO:0009055">
    <property type="term" value="F:electron transfer activity"/>
    <property type="evidence" value="ECO:0007669"/>
    <property type="project" value="InterPro"/>
</dbReference>
<dbReference type="GO" id="GO:0004519">
    <property type="term" value="F:endonuclease activity"/>
    <property type="evidence" value="ECO:0007669"/>
    <property type="project" value="InterPro"/>
</dbReference>
<dbReference type="GO" id="GO:0016491">
    <property type="term" value="F:oxidoreductase activity"/>
    <property type="evidence" value="ECO:0007669"/>
    <property type="project" value="InterPro"/>
</dbReference>
<dbReference type="GO" id="GO:0003723">
    <property type="term" value="F:RNA binding"/>
    <property type="evidence" value="ECO:0000314"/>
    <property type="project" value="SGD"/>
</dbReference>
<dbReference type="GO" id="GO:0000372">
    <property type="term" value="P:Group I intron splicing"/>
    <property type="evidence" value="ECO:0000314"/>
    <property type="project" value="ComplexPortal"/>
</dbReference>
<dbReference type="GO" id="GO:0006122">
    <property type="term" value="P:mitochondrial electron transport, ubiquinol to cytochrome c"/>
    <property type="evidence" value="ECO:0000318"/>
    <property type="project" value="GO_Central"/>
</dbReference>
<dbReference type="GO" id="GO:0090615">
    <property type="term" value="P:mitochondrial mRNA processing"/>
    <property type="evidence" value="ECO:0000314"/>
    <property type="project" value="SGD"/>
</dbReference>
<dbReference type="GO" id="GO:0006397">
    <property type="term" value="P:mRNA processing"/>
    <property type="evidence" value="ECO:0000314"/>
    <property type="project" value="ComplexPortal"/>
</dbReference>
<dbReference type="CDD" id="cd00284">
    <property type="entry name" value="Cytochrome_b_N"/>
    <property type="match status" value="1"/>
</dbReference>
<dbReference type="FunFam" id="3.10.28.10:FF:000018">
    <property type="entry name" value="Intron-encoded DNA endonuclease I-AniI"/>
    <property type="match status" value="1"/>
</dbReference>
<dbReference type="FunFam" id="3.10.28.10:FF:000022">
    <property type="entry name" value="Intron-encoded DNA endonuclease I-AniI"/>
    <property type="match status" value="1"/>
</dbReference>
<dbReference type="Gene3D" id="1.20.810.10">
    <property type="entry name" value="Cytochrome Bc1 Complex, Chain C"/>
    <property type="match status" value="1"/>
</dbReference>
<dbReference type="Gene3D" id="3.10.28.10">
    <property type="entry name" value="Homing endonucleases"/>
    <property type="match status" value="2"/>
</dbReference>
<dbReference type="InterPro" id="IPR005797">
    <property type="entry name" value="Cyt_b/b6_N"/>
</dbReference>
<dbReference type="InterPro" id="IPR027387">
    <property type="entry name" value="Cytb/b6-like_sf"/>
</dbReference>
<dbReference type="InterPro" id="IPR048259">
    <property type="entry name" value="Cytochrome_b_N_euk/bac"/>
</dbReference>
<dbReference type="InterPro" id="IPR016174">
    <property type="entry name" value="Di-haem_cyt_TM"/>
</dbReference>
<dbReference type="InterPro" id="IPR027434">
    <property type="entry name" value="Homing_endonucl"/>
</dbReference>
<dbReference type="InterPro" id="IPR004860">
    <property type="entry name" value="LAGLIDADG_dom"/>
</dbReference>
<dbReference type="PANTHER" id="PTHR19271">
    <property type="entry name" value="CYTOCHROME B"/>
    <property type="match status" value="1"/>
</dbReference>
<dbReference type="PANTHER" id="PTHR19271:SF16">
    <property type="entry name" value="CYTOCHROME B"/>
    <property type="match status" value="1"/>
</dbReference>
<dbReference type="Pfam" id="PF00033">
    <property type="entry name" value="Cytochrome_B"/>
    <property type="match status" value="1"/>
</dbReference>
<dbReference type="Pfam" id="PF00961">
    <property type="entry name" value="LAGLIDADG_1"/>
    <property type="match status" value="2"/>
</dbReference>
<dbReference type="SUPFAM" id="SSF55608">
    <property type="entry name" value="Homing endonucleases"/>
    <property type="match status" value="2"/>
</dbReference>
<dbReference type="SUPFAM" id="SSF81342">
    <property type="entry name" value="Transmembrane di-heme cytochromes"/>
    <property type="match status" value="1"/>
</dbReference>
<dbReference type="PROSITE" id="PS51002">
    <property type="entry name" value="CYTB_NTER"/>
    <property type="match status" value="1"/>
</dbReference>
<geneLocation type="mitochondrion"/>
<protein>
    <recommendedName>
        <fullName>Cytochrome b mRNA maturase bI3</fullName>
    </recommendedName>
</protein>
<organism>
    <name type="scientific">Saccharomyces cerevisiae (strain ATCC 204508 / S288c)</name>
    <name type="common">Baker's yeast</name>
    <dbReference type="NCBI Taxonomy" id="559292"/>
    <lineage>
        <taxon>Eukaryota</taxon>
        <taxon>Fungi</taxon>
        <taxon>Dikarya</taxon>
        <taxon>Ascomycota</taxon>
        <taxon>Saccharomycotina</taxon>
        <taxon>Saccharomycetes</taxon>
        <taxon>Saccharomycetales</taxon>
        <taxon>Saccharomycetaceae</taxon>
        <taxon>Saccharomyces</taxon>
    </lineage>
</organism>
<name>MBI3_YEAST</name>
<evidence type="ECO:0000255" key="1"/>
<evidence type="ECO:0000255" key="2">
    <source>
        <dbReference type="PROSITE-ProRule" id="PRU00968"/>
    </source>
</evidence>
<evidence type="ECO:0000269" key="3">
    <source>
    </source>
</evidence>
<evidence type="ECO:0000269" key="4">
    <source>
    </source>
</evidence>
<evidence type="ECO:0000269" key="5">
    <source>
    </source>
</evidence>
<evidence type="ECO:0000305" key="6"/>
<evidence type="ECO:0007829" key="7">
    <source>
        <dbReference type="PDB" id="2AB5"/>
    </source>
</evidence>
<feature type="chain" id="PRO_0000061915" description="Cytochrome b mRNA maturase bI3">
    <location>
        <begin position="1"/>
        <end position="517"/>
    </location>
</feature>
<feature type="topological domain" description="Mitochondrial matrix" evidence="1">
    <location>
        <begin position="1"/>
        <end position="31"/>
    </location>
</feature>
<feature type="transmembrane region" description="Helical" evidence="2">
    <location>
        <begin position="32"/>
        <end position="52"/>
    </location>
</feature>
<feature type="topological domain" description="Mitochondrial intermembrane" evidence="1">
    <location>
        <begin position="53"/>
        <end position="84"/>
    </location>
</feature>
<feature type="transmembrane region" description="Helical" evidence="2">
    <location>
        <begin position="85"/>
        <end position="105"/>
    </location>
</feature>
<feature type="topological domain" description="Mitochondrial matrix" evidence="1">
    <location>
        <begin position="106"/>
        <end position="115"/>
    </location>
</feature>
<feature type="transmembrane region" description="Helical" evidence="2">
    <location>
        <begin position="116"/>
        <end position="136"/>
    </location>
</feature>
<feature type="topological domain" description="Mitochondrial intermembrane" evidence="1">
    <location>
        <begin position="137"/>
        <end position="145"/>
    </location>
</feature>
<feature type="transmembrane region" description="Helical" evidence="2">
    <location>
        <begin position="146"/>
        <end position="166"/>
    </location>
</feature>
<feature type="topological domain" description="Mitochondrial matrix" evidence="1">
    <location>
        <begin position="167"/>
        <end position="184"/>
    </location>
</feature>
<feature type="transmembrane region" description="Helical" evidence="2">
    <location>
        <begin position="185"/>
        <end position="205"/>
    </location>
</feature>
<feature type="topological domain" description="Mitochondrial intermembrane" evidence="1">
    <location>
        <begin position="206"/>
        <end position="224"/>
    </location>
</feature>
<feature type="transmembrane region" description="Helical" evidence="2">
    <location>
        <begin position="225"/>
        <end position="242"/>
    </location>
</feature>
<feature type="topological domain" description="Mitochondrial matrix" evidence="1">
    <location>
        <begin position="243"/>
        <end position="517"/>
    </location>
</feature>
<feature type="region of interest" description="Cytochrome b">
    <location>
        <begin position="1"/>
        <end position="169"/>
    </location>
</feature>
<feature type="region of interest" description="Maturase">
    <location>
        <begin position="170"/>
        <end position="517"/>
    </location>
</feature>
<feature type="sequence variant" description="In strain: 777-3A.">
    <original>G</original>
    <variation>V</variation>
    <location>
        <position position="269"/>
    </location>
</feature>
<feature type="sequence variant" description="In strain: 777-3A.">
    <original>D</original>
    <variation>N</variation>
    <location>
        <position position="350"/>
    </location>
</feature>
<feature type="sequence variant" description="In strain: 777-3A.">
    <original>E</original>
    <variation>K</variation>
    <location>
        <position position="412"/>
    </location>
</feature>
<feature type="sequence variant" description="In strain: 777-3A.">
    <original>Q</original>
    <variation>M</variation>
    <location>
        <position position="434"/>
    </location>
</feature>
<feature type="sequence variant" description="In strain: 777-3A.">
    <original>S</original>
    <variation>N</variation>
    <location>
        <position position="437"/>
    </location>
</feature>
<feature type="sequence variant" description="In strain: 777-3A.">
    <original>TQ</original>
    <variation>NN</variation>
    <location>
        <begin position="451"/>
        <end position="452"/>
    </location>
</feature>
<feature type="sequence variant" description="In strain: 777-3A.">
    <original>TDK</original>
    <variation>MNE</variation>
    <location>
        <begin position="456"/>
        <end position="458"/>
    </location>
</feature>
<feature type="sequence variant" description="In strain: 777-3A.">
    <original>R</original>
    <variation>K</variation>
    <location>
        <position position="463"/>
    </location>
</feature>
<feature type="sequence variant" description="In strain: 777-3A.">
    <original>G</original>
    <variation>D</variation>
    <location>
        <position position="471"/>
    </location>
</feature>
<feature type="sequence variant" description="In strain: 777-3A.">
    <original>P</original>
    <variation>S</variation>
    <location>
        <position position="515"/>
    </location>
</feature>
<feature type="mutagenesis site" description="In M2011; leads to absence of functional cytochrome b, but does not affect splicing." evidence="5">
    <original>F</original>
    <variation>C</variation>
    <location>
        <position position="151"/>
    </location>
</feature>
<feature type="mutagenesis site" description="In G5037; blocks formation of mature cytochrome b mRNA." evidence="5">
    <original>G</original>
    <variation>D</variation>
    <location>
        <position position="407"/>
    </location>
</feature>
<feature type="helix" evidence="7">
    <location>
        <begin position="264"/>
        <end position="275"/>
    </location>
</feature>
<feature type="strand" evidence="7">
    <location>
        <begin position="276"/>
        <end position="283"/>
    </location>
</feature>
<feature type="strand" evidence="7">
    <location>
        <begin position="286"/>
        <end position="295"/>
    </location>
</feature>
<feature type="helix" evidence="7">
    <location>
        <begin position="297"/>
        <end position="299"/>
    </location>
</feature>
<feature type="helix" evidence="7">
    <location>
        <begin position="300"/>
        <end position="310"/>
    </location>
</feature>
<feature type="strand" evidence="7">
    <location>
        <begin position="314"/>
        <end position="321"/>
    </location>
</feature>
<feature type="strand" evidence="7">
    <location>
        <begin position="327"/>
        <end position="335"/>
    </location>
</feature>
<feature type="helix" evidence="7">
    <location>
        <begin position="338"/>
        <end position="343"/>
    </location>
</feature>
<feature type="helix" evidence="7">
    <location>
        <begin position="345"/>
        <end position="351"/>
    </location>
</feature>
<feature type="helix" evidence="7">
    <location>
        <begin position="359"/>
        <end position="370"/>
    </location>
</feature>
<feature type="helix" evidence="7">
    <location>
        <begin position="376"/>
        <end position="378"/>
    </location>
</feature>
<feature type="helix" evidence="7">
    <location>
        <begin position="392"/>
        <end position="396"/>
    </location>
</feature>
<feature type="helix" evidence="7">
    <location>
        <begin position="401"/>
        <end position="412"/>
    </location>
</feature>
<feature type="strand" evidence="7">
    <location>
        <begin position="413"/>
        <end position="418"/>
    </location>
</feature>
<feature type="strand" evidence="7">
    <location>
        <begin position="423"/>
        <end position="425"/>
    </location>
</feature>
<feature type="strand" evidence="7">
    <location>
        <begin position="427"/>
        <end position="433"/>
    </location>
</feature>
<feature type="helix" evidence="7">
    <location>
        <begin position="438"/>
        <end position="447"/>
    </location>
</feature>
<feature type="strand" evidence="7">
    <location>
        <begin position="454"/>
        <end position="457"/>
    </location>
</feature>
<feature type="strand" evidence="7">
    <location>
        <begin position="462"/>
        <end position="466"/>
    </location>
</feature>
<feature type="helix" evidence="7">
    <location>
        <begin position="469"/>
        <end position="481"/>
    </location>
</feature>
<feature type="helix" evidence="7">
    <location>
        <begin position="489"/>
        <end position="501"/>
    </location>
</feature>
<feature type="helix" evidence="7">
    <location>
        <begin position="505"/>
        <end position="508"/>
    </location>
</feature>
<sequence length="517" mass="61172">MAFRKSNVYLSLVNSYIIDSPQPSSINYWWNMGSLLGLCLVIQIVTGIFMAMHYSSNIELAFSSVEHIMRDVHNGYILRYLHANGASFFFMVMFMHMAKGLYYGSYRSPRVTLWNVGVIIFILTIATAFLGYCCVYGQMSHWGATVITNLFSAIPFVGNDIVSWLWGGFNMEDPYYSNMMLNKSVLCWNIFIWMMNYYIIQLIIYNNMIWNKNNMVKMFIMRRKLAVINMYMYMKLIIQRTYSYYMNNTIIYDKNHKLNTDNPIYAYIGGLFEGDGWITISKKGKYLLYELGIEMHIRDIQLLYKIKNILGIGKVTIKKLKMKDGTIKEMCKFNVRNKNHLKNIIIPIFDKYPMLTNKHYDYLYFKDNLLKDIKYYNDLSYYLRPIKPFNTTEDILNKNYFSSWLIGFFEAESCFSIYKPMNKKMKTASFEVSQNNSMEVMLAIKSYLKITQNIYTDKFNNSRMTTKSINGIKNVVMFINNNPIKLLGYKKLQYLLFLKDLRTITKYNNYFKIPPKY</sequence>
<reference key="1">
    <citation type="journal article" date="1998" name="FEBS Lett.">
        <title>The complete sequence of the mitochondrial genome of Saccharomyces cerevisiae.</title>
        <authorList>
            <person name="Foury F."/>
            <person name="Roganti T."/>
            <person name="Lecrenier N."/>
            <person name="Purnelle B."/>
        </authorList>
    </citation>
    <scope>NUCLEOTIDE SEQUENCE [LARGE SCALE GENOMIC DNA]</scope>
    <source>
        <strain>ATCC 96604 / S288c / FY1679</strain>
    </source>
</reference>
<reference key="2">
    <citation type="journal article" date="2014" name="G3 (Bethesda)">
        <title>The reference genome sequence of Saccharomyces cerevisiae: Then and now.</title>
        <authorList>
            <person name="Engel S.R."/>
            <person name="Dietrich F.S."/>
            <person name="Fisk D.G."/>
            <person name="Binkley G."/>
            <person name="Balakrishnan R."/>
            <person name="Costanzo M.C."/>
            <person name="Dwight S.S."/>
            <person name="Hitz B.C."/>
            <person name="Karra K."/>
            <person name="Nash R.S."/>
            <person name="Weng S."/>
            <person name="Wong E.D."/>
            <person name="Lloyd P."/>
            <person name="Skrzypek M.S."/>
            <person name="Miyasato S.R."/>
            <person name="Simison M."/>
            <person name="Cherry J.M."/>
        </authorList>
    </citation>
    <scope>GENOME REANNOTATION</scope>
    <source>
        <strain>ATCC 96604 / S288c / FY1679</strain>
    </source>
</reference>
<reference key="3">
    <citation type="journal article" date="1989" name="J. Mol. Biol.">
        <title>Protein encoded by the third intron of cytochrome b gene in Saccharomyces cerevisiae is an mRNA maturase. Analysis of mitochondrial mutants, RNA transcripts, proteins and evolutionary relationships.</title>
        <authorList>
            <person name="Lazowska J."/>
            <person name="Claisse M."/>
            <person name="Gargouri A."/>
            <person name="Kotylak Z."/>
            <person name="Spyridakis A."/>
            <person name="Slonimski P.P."/>
        </authorList>
    </citation>
    <scope>NUCLEOTIDE SEQUENCE [GENOMIC DNA] OF 144-517</scope>
    <scope>MUTAGENESIS OF PHE-151 AND GLY-407</scope>
    <scope>SUBCELLULAR LOCATION</scope>
    <source>
        <strain>ATCC 44821 / 777-3A</strain>
    </source>
</reference>
<reference key="4">
    <citation type="journal article" date="2002" name="Proc. Natl. Acad. Sci. U.S.A.">
        <title>Recruitment of intron-encoded and co-opted proteins in splicing of the bI3 group I intron RNA.</title>
        <authorList>
            <person name="Bassi G.S."/>
            <person name="de Oliveira D.M."/>
            <person name="White M.F."/>
            <person name="Weeks K.M."/>
        </authorList>
    </citation>
    <scope>FUNCTION</scope>
    <scope>SUBUNIT</scope>
</reference>
<reference key="5">
    <citation type="journal article" date="2003" name="Biochemistry">
        <title>Kinetic and thermodynamic framework for assembly of the six-component bI3 group I intron ribonucleoprotein catalyst.</title>
        <authorList>
            <person name="Bassi G.S."/>
            <person name="Weeks K.M."/>
        </authorList>
    </citation>
    <scope>FUNCTION</scope>
</reference>
<reference key="6">
    <citation type="journal article" date="2005" name="Nat. Struct. Mol. Biol.">
        <title>Evolution from DNA to RNA recognition by the bI3 LAGLIDADG maturase.</title>
        <authorList>
            <person name="Longo A."/>
            <person name="Leonard C.W."/>
            <person name="Bassi G.S."/>
            <person name="Berndt D."/>
            <person name="Krahn J.M."/>
            <person name="Tanaka Hall T.M."/>
            <person name="Weeks K.M."/>
        </authorList>
    </citation>
    <scope>X-RAY CRYSTALLOGRAPHY (2.2 ANGSTROMS) OF 257-517</scope>
    <scope>RNA-BINDING</scope>
</reference>
<gene>
    <name type="primary">BI3</name>
    <name type="ordered locus">Q0115</name>
</gene>
<comment type="function">
    <text evidence="3 4">Mitochondrial mRNA maturase required for splicing of intron 3 of the cytochrome b (COB) gene, containing its own coding sequence. In vivo splicing requires the formation of a ribonucleoprotein complex together with the imported mitochondrial RNA-splicing protein MRS1. The complex seems to stimulate the intrinsic ribozyme activity of intron bI3 through binding to and stabilizing specific secondary and tertiary structure elements in the RNA.</text>
</comment>
<comment type="subunit">
    <text evidence="3">Forms a ribonucleoprotein complex composed of maturase bI3 and 2 dimers of MRS1 that assemble around the bI3 RNA.</text>
</comment>
<comment type="subcellular location">
    <subcellularLocation>
        <location evidence="6">Mitochondrion inner membrane</location>
        <topology evidence="6">Multi-pass membrane protein</topology>
    </subcellularLocation>
</comment>
<comment type="miscellaneous">
    <text>Encoded from partially processed COB mRNA that terminates with the in-frame coding sequence of the third intron.</text>
</comment>
<comment type="similarity">
    <text evidence="6">In the N-terminal section; belongs to the cytochrome b family.</text>
</comment>
<comment type="similarity">
    <text evidence="6">In the C-terminal section; belongs to the LAGLIDADG endonuclease family.</text>
</comment>